<accession>Q9NUB4</accession>
<feature type="chain" id="PRO_0000079466" description="Uncharacterized protein C20orf141">
    <location>
        <begin position="1"/>
        <end position="165"/>
    </location>
</feature>
<feature type="transmembrane region" description="Helical" evidence="1">
    <location>
        <begin position="135"/>
        <end position="155"/>
    </location>
</feature>
<feature type="region of interest" description="Disordered" evidence="2">
    <location>
        <begin position="1"/>
        <end position="36"/>
    </location>
</feature>
<reference key="1">
    <citation type="journal article" date="2007" name="BMC Genomics">
        <title>The full-ORF clone resource of the German cDNA consortium.</title>
        <authorList>
            <person name="Bechtel S."/>
            <person name="Rosenfelder H."/>
            <person name="Duda A."/>
            <person name="Schmidt C.P."/>
            <person name="Ernst U."/>
            <person name="Wellenreuther R."/>
            <person name="Mehrle A."/>
            <person name="Schuster C."/>
            <person name="Bahr A."/>
            <person name="Bloecker H."/>
            <person name="Heubner D."/>
            <person name="Hoerlein A."/>
            <person name="Michel G."/>
            <person name="Wedler H."/>
            <person name="Koehrer K."/>
            <person name="Ottenwaelder B."/>
            <person name="Poustka A."/>
            <person name="Wiemann S."/>
            <person name="Schupp I."/>
        </authorList>
    </citation>
    <scope>NUCLEOTIDE SEQUENCE [LARGE SCALE MRNA]</scope>
    <source>
        <tissue>Fetal brain</tissue>
    </source>
</reference>
<reference key="2">
    <citation type="journal article" date="2001" name="Nature">
        <title>The DNA sequence and comparative analysis of human chromosome 20.</title>
        <authorList>
            <person name="Deloukas P."/>
            <person name="Matthews L.H."/>
            <person name="Ashurst J.L."/>
            <person name="Burton J."/>
            <person name="Gilbert J.G.R."/>
            <person name="Jones M."/>
            <person name="Stavrides G."/>
            <person name="Almeida J.P."/>
            <person name="Babbage A.K."/>
            <person name="Bagguley C.L."/>
            <person name="Bailey J."/>
            <person name="Barlow K.F."/>
            <person name="Bates K.N."/>
            <person name="Beard L.M."/>
            <person name="Beare D.M."/>
            <person name="Beasley O.P."/>
            <person name="Bird C.P."/>
            <person name="Blakey S.E."/>
            <person name="Bridgeman A.M."/>
            <person name="Brown A.J."/>
            <person name="Buck D."/>
            <person name="Burrill W.D."/>
            <person name="Butler A.P."/>
            <person name="Carder C."/>
            <person name="Carter N.P."/>
            <person name="Chapman J.C."/>
            <person name="Clamp M."/>
            <person name="Clark G."/>
            <person name="Clark L.N."/>
            <person name="Clark S.Y."/>
            <person name="Clee C.M."/>
            <person name="Clegg S."/>
            <person name="Cobley V.E."/>
            <person name="Collier R.E."/>
            <person name="Connor R.E."/>
            <person name="Corby N.R."/>
            <person name="Coulson A."/>
            <person name="Coville G.J."/>
            <person name="Deadman R."/>
            <person name="Dhami P.D."/>
            <person name="Dunn M."/>
            <person name="Ellington A.G."/>
            <person name="Frankland J.A."/>
            <person name="Fraser A."/>
            <person name="French L."/>
            <person name="Garner P."/>
            <person name="Grafham D.V."/>
            <person name="Griffiths C."/>
            <person name="Griffiths M.N.D."/>
            <person name="Gwilliam R."/>
            <person name="Hall R.E."/>
            <person name="Hammond S."/>
            <person name="Harley J.L."/>
            <person name="Heath P.D."/>
            <person name="Ho S."/>
            <person name="Holden J.L."/>
            <person name="Howden P.J."/>
            <person name="Huckle E."/>
            <person name="Hunt A.R."/>
            <person name="Hunt S.E."/>
            <person name="Jekosch K."/>
            <person name="Johnson C.M."/>
            <person name="Johnson D."/>
            <person name="Kay M.P."/>
            <person name="Kimberley A.M."/>
            <person name="King A."/>
            <person name="Knights A."/>
            <person name="Laird G.K."/>
            <person name="Lawlor S."/>
            <person name="Lehvaeslaiho M.H."/>
            <person name="Leversha M.A."/>
            <person name="Lloyd C."/>
            <person name="Lloyd D.M."/>
            <person name="Lovell J.D."/>
            <person name="Marsh V.L."/>
            <person name="Martin S.L."/>
            <person name="McConnachie L.J."/>
            <person name="McLay K."/>
            <person name="McMurray A.A."/>
            <person name="Milne S.A."/>
            <person name="Mistry D."/>
            <person name="Moore M.J.F."/>
            <person name="Mullikin J.C."/>
            <person name="Nickerson T."/>
            <person name="Oliver K."/>
            <person name="Parker A."/>
            <person name="Patel R."/>
            <person name="Pearce T.A.V."/>
            <person name="Peck A.I."/>
            <person name="Phillimore B.J.C.T."/>
            <person name="Prathalingam S.R."/>
            <person name="Plumb R.W."/>
            <person name="Ramsay H."/>
            <person name="Rice C.M."/>
            <person name="Ross M.T."/>
            <person name="Scott C.E."/>
            <person name="Sehra H.K."/>
            <person name="Shownkeen R."/>
            <person name="Sims S."/>
            <person name="Skuce C.D."/>
            <person name="Smith M.L."/>
            <person name="Soderlund C."/>
            <person name="Steward C.A."/>
            <person name="Sulston J.E."/>
            <person name="Swann R.M."/>
            <person name="Sycamore N."/>
            <person name="Taylor R."/>
            <person name="Tee L."/>
            <person name="Thomas D.W."/>
            <person name="Thorpe A."/>
            <person name="Tracey A."/>
            <person name="Tromans A.C."/>
            <person name="Vaudin M."/>
            <person name="Wall M."/>
            <person name="Wallis J.M."/>
            <person name="Whitehead S.L."/>
            <person name="Whittaker P."/>
            <person name="Willey D.L."/>
            <person name="Williams L."/>
            <person name="Williams S.A."/>
            <person name="Wilming L."/>
            <person name="Wray P.W."/>
            <person name="Hubbard T."/>
            <person name="Durbin R.M."/>
            <person name="Bentley D.R."/>
            <person name="Beck S."/>
            <person name="Rogers J."/>
        </authorList>
    </citation>
    <scope>NUCLEOTIDE SEQUENCE [LARGE SCALE GENOMIC DNA]</scope>
</reference>
<reference key="3">
    <citation type="journal article" date="2004" name="Genome Res.">
        <title>The status, quality, and expansion of the NIH full-length cDNA project: the Mammalian Gene Collection (MGC).</title>
        <authorList>
            <consortium name="The MGC Project Team"/>
        </authorList>
    </citation>
    <scope>NUCLEOTIDE SEQUENCE [LARGE SCALE MRNA]</scope>
    <source>
        <tissue>Testis</tissue>
    </source>
</reference>
<comment type="interaction">
    <interactant intactId="EBI-9088162">
        <id>Q9NUB4</id>
    </interactant>
    <interactant intactId="EBI-1222467">
        <id>P02649</id>
        <label>APOE</label>
    </interactant>
    <organismsDiffer>false</organismsDiffer>
    <experiments>3</experiments>
</comment>
<comment type="interaction">
    <interactant intactId="EBI-9088162">
        <id>Q9NUB4</id>
    </interactant>
    <interactant intactId="EBI-930964">
        <id>P54253</id>
        <label>ATXN1</label>
    </interactant>
    <organismsDiffer>false</organismsDiffer>
    <experiments>3</experiments>
</comment>
<comment type="interaction">
    <interactant intactId="EBI-9088162">
        <id>Q9NUB4</id>
    </interactant>
    <interactant intactId="EBI-466029">
        <id>P42858</id>
        <label>HTT</label>
    </interactant>
    <organismsDiffer>false</organismsDiffer>
    <experiments>6</experiments>
</comment>
<comment type="interaction">
    <interactant intactId="EBI-9088162">
        <id>Q9NUB4</id>
    </interactant>
    <interactant intactId="EBI-1055254">
        <id>Q8WXH2</id>
        <label>JPH3</label>
    </interactant>
    <organismsDiffer>false</organismsDiffer>
    <experiments>3</experiments>
</comment>
<comment type="subcellular location">
    <subcellularLocation>
        <location evidence="3">Membrane</location>
        <topology evidence="3">Single-pass membrane protein</topology>
    </subcellularLocation>
</comment>
<protein>
    <recommendedName>
        <fullName>Uncharacterized protein C20orf141</fullName>
    </recommendedName>
</protein>
<organism>
    <name type="scientific">Homo sapiens</name>
    <name type="common">Human</name>
    <dbReference type="NCBI Taxonomy" id="9606"/>
    <lineage>
        <taxon>Eukaryota</taxon>
        <taxon>Metazoa</taxon>
        <taxon>Chordata</taxon>
        <taxon>Craniata</taxon>
        <taxon>Vertebrata</taxon>
        <taxon>Euteleostomi</taxon>
        <taxon>Mammalia</taxon>
        <taxon>Eutheria</taxon>
        <taxon>Euarchontoglires</taxon>
        <taxon>Primates</taxon>
        <taxon>Haplorrhini</taxon>
        <taxon>Catarrhini</taxon>
        <taxon>Hominidae</taxon>
        <taxon>Homo</taxon>
    </lineage>
</organism>
<name>CT141_HUMAN</name>
<sequence>MTRLCLPRPEAREDPIPVPPRGLGAGEGSGSPVRPPVSTWGPSWAQLLDSVLWLGALGLTIQAVFSTTGPALLLLLVSFLTFDLLHRPAGHTLPQRKLLTRGQSQGAGEGPGQQEALLLQMGTVSGQLSLQDALLLLLMGLGPLLRACGMPLTLLGLAFCLHPWA</sequence>
<gene>
    <name type="primary">C20orf141</name>
</gene>
<evidence type="ECO:0000255" key="1"/>
<evidence type="ECO:0000256" key="2">
    <source>
        <dbReference type="SAM" id="MobiDB-lite"/>
    </source>
</evidence>
<evidence type="ECO:0000305" key="3"/>
<proteinExistence type="evidence at protein level"/>
<dbReference type="EMBL" id="AL713708">
    <property type="protein sequence ID" value="CAD28505.1"/>
    <property type="molecule type" value="mRNA"/>
</dbReference>
<dbReference type="EMBL" id="AL035460">
    <property type="status" value="NOT_ANNOTATED_CDS"/>
    <property type="molecule type" value="Genomic_DNA"/>
</dbReference>
<dbReference type="EMBL" id="BC014591">
    <property type="protein sequence ID" value="AAH14591.1"/>
    <property type="molecule type" value="mRNA"/>
</dbReference>
<dbReference type="CCDS" id="CCDS13034.1"/>
<dbReference type="RefSeq" id="NP_001243467.1">
    <property type="nucleotide sequence ID" value="NM_001256538.2"/>
</dbReference>
<dbReference type="RefSeq" id="NP_542777.1">
    <property type="nucleotide sequence ID" value="NM_080739.2"/>
</dbReference>
<dbReference type="BioGRID" id="126141">
    <property type="interactions" value="19"/>
</dbReference>
<dbReference type="FunCoup" id="Q9NUB4">
    <property type="interactions" value="3"/>
</dbReference>
<dbReference type="IntAct" id="Q9NUB4">
    <property type="interactions" value="12"/>
</dbReference>
<dbReference type="STRING" id="9606.ENSP00000369963"/>
<dbReference type="BioMuta" id="C20orf141"/>
<dbReference type="DMDM" id="27734259"/>
<dbReference type="MassIVE" id="Q9NUB4"/>
<dbReference type="PaxDb" id="9606-ENSP00000369963"/>
<dbReference type="Antibodypedia" id="54290">
    <property type="antibodies" value="72 antibodies from 13 providers"/>
</dbReference>
<dbReference type="DNASU" id="128653"/>
<dbReference type="Ensembl" id="ENST00000380589.4">
    <property type="protein sequence ID" value="ENSP00000369963.3"/>
    <property type="gene ID" value="ENSG00000258713.3"/>
</dbReference>
<dbReference type="Ensembl" id="ENST00000603872.2">
    <property type="protein sequence ID" value="ENSP00000473907.1"/>
    <property type="gene ID" value="ENSG00000258713.3"/>
</dbReference>
<dbReference type="GeneID" id="128653"/>
<dbReference type="KEGG" id="hsa:128653"/>
<dbReference type="MANE-Select" id="ENST00000603872.2">
    <property type="protein sequence ID" value="ENSP00000473907.1"/>
    <property type="RefSeq nucleotide sequence ID" value="NM_001256538.2"/>
    <property type="RefSeq protein sequence ID" value="NP_001243467.1"/>
</dbReference>
<dbReference type="UCSC" id="uc002wgw.4">
    <property type="organism name" value="human"/>
</dbReference>
<dbReference type="AGR" id="HGNC:16134"/>
<dbReference type="CTD" id="128653"/>
<dbReference type="GeneCards" id="C20orf141"/>
<dbReference type="HGNC" id="HGNC:16134">
    <property type="gene designation" value="C20orf141"/>
</dbReference>
<dbReference type="HPA" id="ENSG00000258713">
    <property type="expression patterns" value="Tissue enriched (testis)"/>
</dbReference>
<dbReference type="neXtProt" id="NX_Q9NUB4"/>
<dbReference type="OpenTargets" id="ENSG00000258713"/>
<dbReference type="PharmGKB" id="PA25684"/>
<dbReference type="VEuPathDB" id="HostDB:ENSG00000258713"/>
<dbReference type="eggNOG" id="ENOG502RU2X">
    <property type="taxonomic scope" value="Eukaryota"/>
</dbReference>
<dbReference type="GeneTree" id="ENSGT00910000144368"/>
<dbReference type="HOGENOM" id="CLU_136858_0_0_1"/>
<dbReference type="InParanoid" id="Q9NUB4"/>
<dbReference type="OMA" id="HTHLTRG"/>
<dbReference type="OrthoDB" id="9539340at2759"/>
<dbReference type="PAN-GO" id="Q9NUB4">
    <property type="GO annotations" value="0 GO annotations based on evolutionary models"/>
</dbReference>
<dbReference type="PhylomeDB" id="Q9NUB4"/>
<dbReference type="PathwayCommons" id="Q9NUB4"/>
<dbReference type="SignaLink" id="Q9NUB4"/>
<dbReference type="BioGRID-ORCS" id="128653">
    <property type="hits" value="6 hits in 1115 CRISPR screens"/>
</dbReference>
<dbReference type="GenomeRNAi" id="128653"/>
<dbReference type="Pharos" id="Q9NUB4">
    <property type="development level" value="Tdark"/>
</dbReference>
<dbReference type="PRO" id="PR:Q9NUB4"/>
<dbReference type="Proteomes" id="UP000005640">
    <property type="component" value="Chromosome 20"/>
</dbReference>
<dbReference type="RNAct" id="Q9NUB4">
    <property type="molecule type" value="protein"/>
</dbReference>
<dbReference type="Bgee" id="ENSG00000258713">
    <property type="expression patterns" value="Expressed in left testis and 46 other cell types or tissues"/>
</dbReference>
<dbReference type="GO" id="GO:0016020">
    <property type="term" value="C:membrane"/>
    <property type="evidence" value="ECO:0007669"/>
    <property type="project" value="UniProtKB-SubCell"/>
</dbReference>
<dbReference type="InterPro" id="IPR040425">
    <property type="entry name" value="C20orf141-like"/>
</dbReference>
<dbReference type="PANTHER" id="PTHR39222">
    <property type="entry name" value="MCG9903"/>
    <property type="match status" value="1"/>
</dbReference>
<dbReference type="PANTHER" id="PTHR39222:SF1">
    <property type="entry name" value="RIKEN CDNA 1700020A23 GENE"/>
    <property type="match status" value="1"/>
</dbReference>
<dbReference type="Pfam" id="PF17717">
    <property type="entry name" value="DUF5562"/>
    <property type="match status" value="1"/>
</dbReference>
<keyword id="KW-0472">Membrane</keyword>
<keyword id="KW-1185">Reference proteome</keyword>
<keyword id="KW-0812">Transmembrane</keyword>
<keyword id="KW-1133">Transmembrane helix</keyword>